<accession>Q6PID8</accession>
<accession>Q86Y99</accession>
<accession>Q92554</accession>
<proteinExistence type="evidence at protein level"/>
<dbReference type="EMBL" id="D87454">
    <property type="protein sequence ID" value="BAA13395.1"/>
    <property type="status" value="ALT_INIT"/>
    <property type="molecule type" value="mRNA"/>
</dbReference>
<dbReference type="EMBL" id="CH236950">
    <property type="protein sequence ID" value="EAL24096.1"/>
    <property type="molecule type" value="Genomic_DNA"/>
</dbReference>
<dbReference type="EMBL" id="CH471070">
    <property type="protein sequence ID" value="EAW83744.1"/>
    <property type="molecule type" value="Genomic_DNA"/>
</dbReference>
<dbReference type="EMBL" id="BC036464">
    <property type="protein sequence ID" value="AAH36464.1"/>
    <property type="molecule type" value="mRNA"/>
</dbReference>
<dbReference type="EMBL" id="BC044884">
    <property type="protein sequence ID" value="AAH44884.1"/>
    <property type="molecule type" value="mRNA"/>
</dbReference>
<dbReference type="CCDS" id="CCDS5815.1">
    <molecule id="Q6PID8-1"/>
</dbReference>
<dbReference type="RefSeq" id="NP_055812.1">
    <molecule id="Q6PID8-1"/>
    <property type="nucleotide sequence ID" value="NM_014997.4"/>
</dbReference>
<dbReference type="RefSeq" id="XP_047276017.1">
    <molecule id="Q6PID8-2"/>
    <property type="nucleotide sequence ID" value="XM_047420061.1"/>
</dbReference>
<dbReference type="RefSeq" id="XP_047276018.1">
    <molecule id="Q6PID8-2"/>
    <property type="nucleotide sequence ID" value="XM_047420062.1"/>
</dbReference>
<dbReference type="RefSeq" id="XP_047276019.1">
    <molecule id="Q6PID8-2"/>
    <property type="nucleotide sequence ID" value="XM_047420063.1"/>
</dbReference>
<dbReference type="RefSeq" id="XP_054213615.1">
    <molecule id="Q6PID8-2"/>
    <property type="nucleotide sequence ID" value="XM_054357640.1"/>
</dbReference>
<dbReference type="RefSeq" id="XP_054213616.1">
    <molecule id="Q6PID8-2"/>
    <property type="nucleotide sequence ID" value="XM_054357641.1"/>
</dbReference>
<dbReference type="RefSeq" id="XP_054213617.1">
    <molecule id="Q6PID8-2"/>
    <property type="nucleotide sequence ID" value="XM_054357642.1"/>
</dbReference>
<dbReference type="PDB" id="9D8P">
    <property type="method" value="EM"/>
    <property type="resolution" value="3.20 A"/>
    <property type="chains" value="A=41-442"/>
</dbReference>
<dbReference type="PDBsum" id="9D8P"/>
<dbReference type="EMDB" id="EMD-46644"/>
<dbReference type="EMDB" id="EMD-46645"/>
<dbReference type="SMR" id="Q6PID8"/>
<dbReference type="BioGRID" id="116652">
    <property type="interactions" value="59"/>
</dbReference>
<dbReference type="ComplexPortal" id="CPX-2223">
    <property type="entry name" value="KLHDC10-Elongin C-Elongin B E3 ubiquitin ligase complex"/>
</dbReference>
<dbReference type="FunCoup" id="Q6PID8">
    <property type="interactions" value="2518"/>
</dbReference>
<dbReference type="IntAct" id="Q6PID8">
    <property type="interactions" value="38"/>
</dbReference>
<dbReference type="MINT" id="Q6PID8"/>
<dbReference type="STRING" id="9606.ENSP00000334140"/>
<dbReference type="GlyGen" id="Q6PID8">
    <property type="glycosylation" value="1 site"/>
</dbReference>
<dbReference type="iPTMnet" id="Q6PID8"/>
<dbReference type="PhosphoSitePlus" id="Q6PID8"/>
<dbReference type="BioMuta" id="KLHDC10"/>
<dbReference type="DMDM" id="74737721"/>
<dbReference type="jPOST" id="Q6PID8"/>
<dbReference type="MassIVE" id="Q6PID8"/>
<dbReference type="PaxDb" id="9606-ENSP00000334140"/>
<dbReference type="PeptideAtlas" id="Q6PID8"/>
<dbReference type="ProteomicsDB" id="67150">
    <molecule id="Q6PID8-1"/>
</dbReference>
<dbReference type="ProteomicsDB" id="67151">
    <molecule id="Q6PID8-2"/>
</dbReference>
<dbReference type="Pumba" id="Q6PID8"/>
<dbReference type="Antibodypedia" id="17939">
    <property type="antibodies" value="20 antibodies from 11 providers"/>
</dbReference>
<dbReference type="DNASU" id="23008"/>
<dbReference type="Ensembl" id="ENST00000335420.10">
    <molecule id="Q6PID8-1"/>
    <property type="protein sequence ID" value="ENSP00000334140.4"/>
    <property type="gene ID" value="ENSG00000128607.14"/>
</dbReference>
<dbReference type="GeneID" id="23008"/>
<dbReference type="KEGG" id="hsa:23008"/>
<dbReference type="MANE-Select" id="ENST00000335420.10">
    <property type="protein sequence ID" value="ENSP00000334140.4"/>
    <property type="RefSeq nucleotide sequence ID" value="NM_014997.4"/>
    <property type="RefSeq protein sequence ID" value="NP_055812.1"/>
</dbReference>
<dbReference type="UCSC" id="uc003vpj.3">
    <molecule id="Q6PID8-1"/>
    <property type="organism name" value="human"/>
</dbReference>
<dbReference type="AGR" id="HGNC:22194"/>
<dbReference type="CTD" id="23008"/>
<dbReference type="DisGeNET" id="23008"/>
<dbReference type="GeneCards" id="KLHDC10"/>
<dbReference type="HGNC" id="HGNC:22194">
    <property type="gene designation" value="KLHDC10"/>
</dbReference>
<dbReference type="HPA" id="ENSG00000128607">
    <property type="expression patterns" value="Low tissue specificity"/>
</dbReference>
<dbReference type="MIM" id="615152">
    <property type="type" value="gene"/>
</dbReference>
<dbReference type="neXtProt" id="NX_Q6PID8"/>
<dbReference type="OpenTargets" id="ENSG00000128607"/>
<dbReference type="PharmGKB" id="PA164721976"/>
<dbReference type="VEuPathDB" id="HostDB:ENSG00000128607"/>
<dbReference type="eggNOG" id="KOG0379">
    <property type="taxonomic scope" value="Eukaryota"/>
</dbReference>
<dbReference type="GeneTree" id="ENSGT00940000155977"/>
<dbReference type="HOGENOM" id="CLU_030914_0_0_1"/>
<dbReference type="InParanoid" id="Q6PID8"/>
<dbReference type="OMA" id="IHKHYLY"/>
<dbReference type="OrthoDB" id="7676067at2759"/>
<dbReference type="PAN-GO" id="Q6PID8">
    <property type="GO annotations" value="1 GO annotation based on evolutionary models"/>
</dbReference>
<dbReference type="PhylomeDB" id="Q6PID8"/>
<dbReference type="TreeFam" id="TF314081"/>
<dbReference type="PathwayCommons" id="Q6PID8"/>
<dbReference type="SignaLink" id="Q6PID8"/>
<dbReference type="UniPathway" id="UPA00143"/>
<dbReference type="BioGRID-ORCS" id="23008">
    <property type="hits" value="14 hits in 1161 CRISPR screens"/>
</dbReference>
<dbReference type="ChiTaRS" id="KLHDC10">
    <property type="organism name" value="human"/>
</dbReference>
<dbReference type="GenomeRNAi" id="23008"/>
<dbReference type="Pharos" id="Q6PID8">
    <property type="development level" value="Tdark"/>
</dbReference>
<dbReference type="PRO" id="PR:Q6PID8"/>
<dbReference type="Proteomes" id="UP000005640">
    <property type="component" value="Chromosome 7"/>
</dbReference>
<dbReference type="RNAct" id="Q6PID8">
    <property type="molecule type" value="protein"/>
</dbReference>
<dbReference type="Bgee" id="ENSG00000128607">
    <property type="expression patterns" value="Expressed in endothelial cell and 213 other cell types or tissues"/>
</dbReference>
<dbReference type="ExpressionAtlas" id="Q6PID8">
    <property type="expression patterns" value="baseline and differential"/>
</dbReference>
<dbReference type="GO" id="GO:0031462">
    <property type="term" value="C:Cul2-RING ubiquitin ligase complex"/>
    <property type="evidence" value="ECO:0000314"/>
    <property type="project" value="UniProtKB"/>
</dbReference>
<dbReference type="GO" id="GO:0005737">
    <property type="term" value="C:cytoplasm"/>
    <property type="evidence" value="ECO:0000314"/>
    <property type="project" value="UniProt"/>
</dbReference>
<dbReference type="GO" id="GO:0005654">
    <property type="term" value="C:nucleoplasm"/>
    <property type="evidence" value="ECO:0000314"/>
    <property type="project" value="HPA"/>
</dbReference>
<dbReference type="GO" id="GO:1990756">
    <property type="term" value="F:ubiquitin-like ligase-substrate adaptor activity"/>
    <property type="evidence" value="ECO:0000314"/>
    <property type="project" value="UniProtKB"/>
</dbReference>
<dbReference type="GO" id="GO:0032874">
    <property type="term" value="P:positive regulation of stress-activated MAPK cascade"/>
    <property type="evidence" value="ECO:0000318"/>
    <property type="project" value="GO_Central"/>
</dbReference>
<dbReference type="GO" id="GO:0016567">
    <property type="term" value="P:protein ubiquitination"/>
    <property type="evidence" value="ECO:0007669"/>
    <property type="project" value="UniProtKB-UniPathway"/>
</dbReference>
<dbReference type="GO" id="GO:0072344">
    <property type="term" value="P:rescue of stalled ribosome"/>
    <property type="evidence" value="ECO:0000314"/>
    <property type="project" value="UniProtKB"/>
</dbReference>
<dbReference type="GO" id="GO:0140627">
    <property type="term" value="P:ubiquitin-dependent protein catabolic process via the C-end degron rule pathway"/>
    <property type="evidence" value="ECO:0000314"/>
    <property type="project" value="UniProtKB"/>
</dbReference>
<dbReference type="FunFam" id="2.120.10.80:FF:000009">
    <property type="entry name" value="Kelch domain-containing protein 10"/>
    <property type="match status" value="1"/>
</dbReference>
<dbReference type="FunFam" id="2.120.10.80:FF:000010">
    <property type="entry name" value="kelch domain-containing protein 10"/>
    <property type="match status" value="1"/>
</dbReference>
<dbReference type="Gene3D" id="2.120.10.80">
    <property type="entry name" value="Kelch-type beta propeller"/>
    <property type="match status" value="2"/>
</dbReference>
<dbReference type="InterPro" id="IPR015915">
    <property type="entry name" value="Kelch-typ_b-propeller"/>
</dbReference>
<dbReference type="InterPro" id="IPR006652">
    <property type="entry name" value="Kelch_1"/>
</dbReference>
<dbReference type="InterPro" id="IPR052125">
    <property type="entry name" value="KLHDC10"/>
</dbReference>
<dbReference type="PANTHER" id="PTHR46428">
    <property type="entry name" value="KELCH DOMAIN-CONTAINING PROTEIN 10"/>
    <property type="match status" value="1"/>
</dbReference>
<dbReference type="PANTHER" id="PTHR46428:SF1">
    <property type="entry name" value="KELCH DOMAIN-CONTAINING PROTEIN 10"/>
    <property type="match status" value="1"/>
</dbReference>
<dbReference type="Pfam" id="PF13418">
    <property type="entry name" value="Kelch_4"/>
    <property type="match status" value="1"/>
</dbReference>
<dbReference type="Pfam" id="PF24681">
    <property type="entry name" value="Kelch_KLHDC2_KLHL20_DRC7"/>
    <property type="match status" value="1"/>
</dbReference>
<dbReference type="SMART" id="SM00612">
    <property type="entry name" value="Kelch"/>
    <property type="match status" value="2"/>
</dbReference>
<dbReference type="SUPFAM" id="SSF117281">
    <property type="entry name" value="Kelch motif"/>
    <property type="match status" value="1"/>
</dbReference>
<dbReference type="SUPFAM" id="SSF101898">
    <property type="entry name" value="NHL repeat"/>
    <property type="match status" value="1"/>
</dbReference>
<organism>
    <name type="scientific">Homo sapiens</name>
    <name type="common">Human</name>
    <dbReference type="NCBI Taxonomy" id="9606"/>
    <lineage>
        <taxon>Eukaryota</taxon>
        <taxon>Metazoa</taxon>
        <taxon>Chordata</taxon>
        <taxon>Craniata</taxon>
        <taxon>Vertebrata</taxon>
        <taxon>Euteleostomi</taxon>
        <taxon>Mammalia</taxon>
        <taxon>Eutheria</taxon>
        <taxon>Euarchontoglires</taxon>
        <taxon>Primates</taxon>
        <taxon>Haplorrhini</taxon>
        <taxon>Catarrhini</taxon>
        <taxon>Hominidae</taxon>
        <taxon>Homo</taxon>
    </lineage>
</organism>
<evidence type="ECO:0000250" key="1">
    <source>
        <dbReference type="UniProtKB" id="Q6PAR0"/>
    </source>
</evidence>
<evidence type="ECO:0000256" key="2">
    <source>
        <dbReference type="SAM" id="MobiDB-lite"/>
    </source>
</evidence>
<evidence type="ECO:0000269" key="3">
    <source>
    </source>
</evidence>
<evidence type="ECO:0000269" key="4">
    <source>
    </source>
</evidence>
<evidence type="ECO:0000269" key="5">
    <source>
    </source>
</evidence>
<evidence type="ECO:0000269" key="6">
    <source>
    </source>
</evidence>
<evidence type="ECO:0000269" key="7">
    <source>
    </source>
</evidence>
<evidence type="ECO:0000269" key="8">
    <source>
    </source>
</evidence>
<evidence type="ECO:0000303" key="9">
    <source>
    </source>
</evidence>
<evidence type="ECO:0000303" key="10">
    <source>
    </source>
</evidence>
<evidence type="ECO:0000305" key="11"/>
<evidence type="ECO:0000312" key="12">
    <source>
        <dbReference type="HGNC" id="HGNC:22194"/>
    </source>
</evidence>
<evidence type="ECO:0007744" key="13">
    <source>
        <dbReference type="PDB" id="9D8P"/>
    </source>
</evidence>
<evidence type="ECO:0007829" key="14">
    <source>
        <dbReference type="PDB" id="9D8P"/>
    </source>
</evidence>
<comment type="function">
    <text evidence="1 5 6 7 8">Substrate-recognition component of a Cul2-RING (CRL2) E3 ubiquitin-protein ligase complex of the DesCEND (destruction via C-end degrons) pathway, which recognizes a C-degron located at the extreme C-terminus of target proteins, leading to their ubiquitination and degradation (PubMed:29779948, PubMed:33909987). The C-degron recognized by the DesCEND pathway is usually a motif of less than ten residues and can be present in full-length proteins, truncated proteins or proteolytically cleaved forms (PubMed:29779948, PubMed:33909987, PubMed:39548056). The CRL2(KLHDC10) complex specifically recognizes proteins with a proline-glycine (Pro-Gly) or an alanine tail (CAT tail) at the C-terminus, leading to their ubiquitination and degradation (PubMed:29779948, PubMed:33909987). The CRL2(KLHDC10) complex is involved in the ribosome-associated quality control (RQC) pathway, which mediates the extraction of incompletely synthesized nascent chains from stalled ribosomes: CRL2(KLHDC10) acts downstream of NEMF and recognizes CAT tails associated with stalled nascent chains, leading to their ubiquitination and degradation (PubMed:33909987). Participates in the oxidative stress-induced cell death through MAP3K5 activation (PubMed:23102700). Inhibits PPP5C phosphatase activity on MAP3K5 (PubMed:23102700). Acts as a regulator of necroptosis (By similarity).</text>
</comment>
<comment type="pathway">
    <text evidence="6 7 8">Protein modification; protein ubiquitination.</text>
</comment>
<comment type="subunit">
    <text evidence="5 6 7">Component of a CRL2 E3 ubiquitin-protein ligase complex, also named ECS (Elongin BC-CUL2/5-SOCS-box protein) complex, composed of CUL2, Elongin BC (ELOB and ELOC), RBX1 and substrate-specific adapter KLHDC10 (PubMed:23102700, PubMed:29779948, PubMed:33909987). Interacts (via the 6 Kelch repeats) with PPP5C (PubMed:23102700).</text>
</comment>
<comment type="interaction">
    <interactant intactId="EBI-3201175">
        <id>Q6PID8</id>
    </interactant>
    <interactant intactId="EBI-744342">
        <id>Q8IVD9</id>
        <label>NUDCD3</label>
    </interactant>
    <organismsDiffer>false</organismsDiffer>
    <experiments>2</experiments>
</comment>
<comment type="subcellular location">
    <subcellularLocation>
        <location evidence="5">Nucleus</location>
    </subcellularLocation>
    <subcellularLocation>
        <location evidence="5">Cytoplasm</location>
    </subcellularLocation>
</comment>
<comment type="alternative products">
    <event type="alternative splicing"/>
    <isoform>
        <id>Q6PID8-1</id>
        <name>1</name>
        <sequence type="displayed"/>
    </isoform>
    <isoform>
        <id>Q6PID8-2</id>
        <name>2</name>
        <sequence type="described" ref="VSP_031484"/>
    </isoform>
</comment>
<comment type="developmental stage">
    <text evidence="3">Expressed in fetal brain, liver, lung, kidney and placenta.</text>
</comment>
<comment type="similarity">
    <text evidence="11">Belongs to the KLHDC10 family.</text>
</comment>
<comment type="sequence caution" evidence="11">
    <conflict type="erroneous initiation">
        <sequence resource="EMBL-CDS" id="BAA13395"/>
    </conflict>
    <text>Extended N-terminus.</text>
</comment>
<reference key="1">
    <citation type="journal article" date="1996" name="DNA Res.">
        <title>Prediction of the coding sequences of unidentified human genes. VI. The coding sequences of 80 new genes (KIAA0201-KIAA0280) deduced by analysis of cDNA clones from cell line KG-1 and brain.</title>
        <authorList>
            <person name="Nagase T."/>
            <person name="Seki N."/>
            <person name="Ishikawa K."/>
            <person name="Ohira M."/>
            <person name="Kawarabayasi Y."/>
            <person name="Ohara O."/>
            <person name="Tanaka A."/>
            <person name="Kotani H."/>
            <person name="Miyajima N."/>
            <person name="Nomura N."/>
        </authorList>
    </citation>
    <scope>NUCLEOTIDE SEQUENCE [LARGE SCALE MRNA] (ISOFORM 2)</scope>
    <source>
        <tissue>Bone marrow</tissue>
    </source>
</reference>
<reference key="2">
    <citation type="journal article" date="2003" name="Science">
        <title>Human chromosome 7: DNA sequence and biology.</title>
        <authorList>
            <person name="Scherer S.W."/>
            <person name="Cheung J."/>
            <person name="MacDonald J.R."/>
            <person name="Osborne L.R."/>
            <person name="Nakabayashi K."/>
            <person name="Herbrick J.-A."/>
            <person name="Carson A.R."/>
            <person name="Parker-Katiraee L."/>
            <person name="Skaug J."/>
            <person name="Khaja R."/>
            <person name="Zhang J."/>
            <person name="Hudek A.K."/>
            <person name="Li M."/>
            <person name="Haddad M."/>
            <person name="Duggan G.E."/>
            <person name="Fernandez B.A."/>
            <person name="Kanematsu E."/>
            <person name="Gentles S."/>
            <person name="Christopoulos C.C."/>
            <person name="Choufani S."/>
            <person name="Kwasnicka D."/>
            <person name="Zheng X.H."/>
            <person name="Lai Z."/>
            <person name="Nusskern D.R."/>
            <person name="Zhang Q."/>
            <person name="Gu Z."/>
            <person name="Lu F."/>
            <person name="Zeesman S."/>
            <person name="Nowaczyk M.J."/>
            <person name="Teshima I."/>
            <person name="Chitayat D."/>
            <person name="Shuman C."/>
            <person name="Weksberg R."/>
            <person name="Zackai E.H."/>
            <person name="Grebe T.A."/>
            <person name="Cox S.R."/>
            <person name="Kirkpatrick S.J."/>
            <person name="Rahman N."/>
            <person name="Friedman J.M."/>
            <person name="Heng H.H.Q."/>
            <person name="Pelicci P.G."/>
            <person name="Lo-Coco F."/>
            <person name="Belloni E."/>
            <person name="Shaffer L.G."/>
            <person name="Pober B."/>
            <person name="Morton C.C."/>
            <person name="Gusella J.F."/>
            <person name="Bruns G.A.P."/>
            <person name="Korf B.R."/>
            <person name="Quade B.J."/>
            <person name="Ligon A.H."/>
            <person name="Ferguson H."/>
            <person name="Higgins A.W."/>
            <person name="Leach N.T."/>
            <person name="Herrick S.R."/>
            <person name="Lemyre E."/>
            <person name="Farra C.G."/>
            <person name="Kim H.-G."/>
            <person name="Summers A.M."/>
            <person name="Gripp K.W."/>
            <person name="Roberts W."/>
            <person name="Szatmari P."/>
            <person name="Winsor E.J.T."/>
            <person name="Grzeschik K.-H."/>
            <person name="Teebi A."/>
            <person name="Minassian B.A."/>
            <person name="Kere J."/>
            <person name="Armengol L."/>
            <person name="Pujana M.A."/>
            <person name="Estivill X."/>
            <person name="Wilson M.D."/>
            <person name="Koop B.F."/>
            <person name="Tosi S."/>
            <person name="Moore G.E."/>
            <person name="Boright A.P."/>
            <person name="Zlotorynski E."/>
            <person name="Kerem B."/>
            <person name="Kroisel P.M."/>
            <person name="Petek E."/>
            <person name="Oscier D.G."/>
            <person name="Mould S.J."/>
            <person name="Doehner H."/>
            <person name="Doehner K."/>
            <person name="Rommens J.M."/>
            <person name="Vincent J.B."/>
            <person name="Venter J.C."/>
            <person name="Li P.W."/>
            <person name="Mural R.J."/>
            <person name="Adams M.D."/>
            <person name="Tsui L.-C."/>
        </authorList>
    </citation>
    <scope>NUCLEOTIDE SEQUENCE [LARGE SCALE GENOMIC DNA]</scope>
</reference>
<reference key="3">
    <citation type="submission" date="2005-07" db="EMBL/GenBank/DDBJ databases">
        <authorList>
            <person name="Mural R.J."/>
            <person name="Istrail S."/>
            <person name="Sutton G.G."/>
            <person name="Florea L."/>
            <person name="Halpern A.L."/>
            <person name="Mobarry C.M."/>
            <person name="Lippert R."/>
            <person name="Walenz B."/>
            <person name="Shatkay H."/>
            <person name="Dew I."/>
            <person name="Miller J.R."/>
            <person name="Flanigan M.J."/>
            <person name="Edwards N.J."/>
            <person name="Bolanos R."/>
            <person name="Fasulo D."/>
            <person name="Halldorsson B.V."/>
            <person name="Hannenhalli S."/>
            <person name="Turner R."/>
            <person name="Yooseph S."/>
            <person name="Lu F."/>
            <person name="Nusskern D.R."/>
            <person name="Shue B.C."/>
            <person name="Zheng X.H."/>
            <person name="Zhong F."/>
            <person name="Delcher A.L."/>
            <person name="Huson D.H."/>
            <person name="Kravitz S.A."/>
            <person name="Mouchard L."/>
            <person name="Reinert K."/>
            <person name="Remington K.A."/>
            <person name="Clark A.G."/>
            <person name="Waterman M.S."/>
            <person name="Eichler E.E."/>
            <person name="Adams M.D."/>
            <person name="Hunkapiller M.W."/>
            <person name="Myers E.W."/>
            <person name="Venter J.C."/>
        </authorList>
    </citation>
    <scope>NUCLEOTIDE SEQUENCE [LARGE SCALE GENOMIC DNA]</scope>
</reference>
<reference key="4">
    <citation type="journal article" date="2004" name="Genome Res.">
        <title>The status, quality, and expansion of the NIH full-length cDNA project: the Mammalian Gene Collection (MGC).</title>
        <authorList>
            <consortium name="The MGC Project Team"/>
        </authorList>
    </citation>
    <scope>NUCLEOTIDE SEQUENCE [LARGE SCALE MRNA] (ISOFORM 1)</scope>
    <scope>VARIANTS GLY-183; VAL-274 AND GLY-295</scope>
    <source>
        <tissue>Testis</tissue>
    </source>
</reference>
<reference key="5">
    <citation type="journal article" date="2004" name="Genomics">
        <title>Imprinting analysis of 10 genes and/or transcripts in a 1.5-Mb MEST-flanking region at human chromosome 7q32.</title>
        <authorList>
            <person name="Yamada T."/>
            <person name="Mitsuya K."/>
            <person name="Kayashima T."/>
            <person name="Yamasaki K."/>
            <person name="Ohta T."/>
            <person name="Yoshiura K."/>
            <person name="Matsumoto N."/>
            <person name="Yamada H."/>
            <person name="Minakami H."/>
            <person name="Oshimura M."/>
            <person name="Niikawa N."/>
            <person name="Kishino T."/>
        </authorList>
    </citation>
    <scope>IDENTIFICATION</scope>
    <scope>DEVELOPMENTAL STAGE</scope>
</reference>
<reference key="6">
    <citation type="journal article" date="2012" name="Mol. Cell">
        <title>The Kelch repeat protein KLHDC10 regulates oxidative stress-induced ASK1 activation by suppressing PP5.</title>
        <authorList>
            <person name="Sekine Y."/>
            <person name="Hatanaka R."/>
            <person name="Watanabe T."/>
            <person name="Sono N."/>
            <person name="Iemura S."/>
            <person name="Natsume T."/>
            <person name="Kuranaga E."/>
            <person name="Miura M."/>
            <person name="Takeda K."/>
            <person name="Ichijo H."/>
        </authorList>
    </citation>
    <scope>FUNCTION</scope>
    <scope>INTERACTION WITH CUL2; PPP5C; ELOB AND ELOC</scope>
    <scope>SUBCELLULAR LOCATION</scope>
    <scope>MUTAGENESIS OF ALA-409</scope>
</reference>
<reference key="7">
    <citation type="journal article" date="2018" name="Cell">
        <title>The eukaryotic proteome is shaped by E3 ubiquitin ligases targeting C-terminal degrons.</title>
        <authorList>
            <person name="Koren I."/>
            <person name="Timms R.T."/>
            <person name="Kula T."/>
            <person name="Xu Q."/>
            <person name="Li M.Z."/>
            <person name="Elledge S.J."/>
        </authorList>
    </citation>
    <scope>FUNCTION</scope>
    <scope>PATHWAY</scope>
    <scope>IDENTIFICATION IN A CRL2 E3 UBIQUITIN-PROTEIN LIGASE COMPLEX</scope>
</reference>
<reference key="8">
    <citation type="journal article" date="2021" name="Mol. Cell">
        <title>Convergence of mammalian RQC and C-end rule proteolytic pathways via alanine tailing.</title>
        <authorList>
            <person name="Thrun A."/>
            <person name="Garzia A."/>
            <person name="Kigoshi-Tansho Y."/>
            <person name="Patil P.R."/>
            <person name="Umbaugh C.S."/>
            <person name="Dallinger T."/>
            <person name="Liu J."/>
            <person name="Kreger S."/>
            <person name="Patrizi A."/>
            <person name="Cox G.A."/>
            <person name="Tuschl T."/>
            <person name="Joazeiro C.A.P."/>
        </authorList>
    </citation>
    <scope>FUNCTION</scope>
    <scope>PATHWAY</scope>
    <scope>IDENTIFICATION IN A CRL2 E3 UBIQUITIN-PROTEIN LIGASE COMPLEX</scope>
</reference>
<reference evidence="13" key="9">
    <citation type="journal article" date="2024" name="Nat. Commun.">
        <title>Structural basis for C-degron selectivity across KLHDCX family E3 ubiquitin ligases.</title>
        <authorList>
            <person name="Scott D.C."/>
            <person name="Chittori S."/>
            <person name="Purser N."/>
            <person name="King M.T."/>
            <person name="Maiwald S.A."/>
            <person name="Churion K."/>
            <person name="Nourse A."/>
            <person name="Lee C."/>
            <person name="Paulo J.A."/>
            <person name="Miller D.J."/>
            <person name="Elledge S.J."/>
            <person name="Harper J.W."/>
            <person name="Kleiger G."/>
            <person name="Schulman B.A."/>
        </authorList>
    </citation>
    <scope>STRUCTURE BY ELECTRON MICROSCOPY (3.20 ANGSTROMS) OF 41-442 IN COMPLEX WITH ELOB; ELOC AND UBIQUITIN</scope>
    <scope>FUNCTION</scope>
    <scope>PATHWAY</scope>
    <scope>KELCH REPEATS</scope>
</reference>
<gene>
    <name evidence="9 12" type="primary">KLHDC10</name>
    <name evidence="10" type="synonym">KIAA0265</name>
</gene>
<name>KLD10_HUMAN</name>
<sequence>MSAAQGWDRNRRRGGGAAGAGGGGSGAGGGSGGSGGRGTGQLNRFVQLSGRPHLPGKKKIRWDPVRRRFIQSCPIIRIPNRFLRGHRPPPARSGHRCVADNTNLYVFGGYNPDYDESGGPDNEDYPLFRELWRYHFATGVWHQMGTDGYMPRELASMSLVLHGNNLLVFGGTGIPFGESNGNDVHVCNVKYKRWALLSCRGKKPSRIYGQAMAIINGSLYVFGGTTGYIYSTDLHKLDLNTREWTQLKPNNLSCDLPEERYRHEIAHDGQRIYILGGGTSWTAYSLNKIHAYNLETNAWEEIATKPHEKIGFPAARRCHSCVQIKNDVFICGGYNGEVILGDIWKLNLQTFQWVKLPATMPEPVYFHCAAVTPAGCMYIHGGVVNIHENKRTGSLFKIWLVVPSLLELAWEKLLAAFPNLANLSRTQLLHLGLTQGLIERLK</sequence>
<protein>
    <recommendedName>
        <fullName evidence="11">Kelch domain-containing protein 10</fullName>
    </recommendedName>
</protein>
<feature type="chain" id="PRO_0000319436" description="Kelch domain-containing protein 10">
    <location>
        <begin position="1"/>
        <end position="442"/>
    </location>
</feature>
<feature type="repeat" description="Kelch 1" evidence="8 13">
    <location>
        <begin position="87"/>
        <end position="154"/>
    </location>
</feature>
<feature type="repeat" description="Kelch 2" evidence="8 13">
    <location>
        <begin position="155"/>
        <end position="198"/>
    </location>
</feature>
<feature type="repeat" description="Kelch 3" evidence="8 13">
    <location>
        <begin position="199"/>
        <end position="260"/>
    </location>
</feature>
<feature type="repeat" description="Kelch 4" evidence="8 13">
    <location>
        <begin position="261"/>
        <end position="319"/>
    </location>
</feature>
<feature type="repeat" description="Kelch 5" evidence="8 13">
    <location>
        <begin position="320"/>
        <end position="364"/>
    </location>
</feature>
<feature type="repeat" description="Kelch 6" evidence="8 13">
    <location>
        <begin position="365"/>
        <end position="403"/>
    </location>
</feature>
<feature type="region of interest" description="Disordered" evidence="2">
    <location>
        <begin position="1"/>
        <end position="57"/>
    </location>
</feature>
<feature type="region of interest" description="Interaction with CUL2" evidence="5">
    <location>
        <begin position="401"/>
        <end position="442"/>
    </location>
</feature>
<feature type="compositionally biased region" description="Gly residues" evidence="2">
    <location>
        <begin position="15"/>
        <end position="39"/>
    </location>
</feature>
<feature type="modified residue" description="Omega-N-methylarginine" evidence="1">
    <location>
        <position position="13"/>
    </location>
</feature>
<feature type="splice variant" id="VSP_031484" description="In isoform 2." evidence="10">
    <location>
        <begin position="1"/>
        <end position="143"/>
    </location>
</feature>
<feature type="sequence variant" id="VAR_039005" description="In dbSNP:rs3734928.">
    <original>S</original>
    <variation>L</variation>
    <location>
        <position position="2"/>
    </location>
</feature>
<feature type="sequence variant" id="VAR_039006" description="In dbSNP:rs17854337." evidence="4">
    <original>D</original>
    <variation>G</variation>
    <location>
        <position position="183"/>
    </location>
</feature>
<feature type="sequence variant" id="VAR_039007" description="In dbSNP:rs17854336." evidence="4">
    <original>I</original>
    <variation>V</variation>
    <location>
        <position position="274"/>
    </location>
</feature>
<feature type="sequence variant" id="VAR_039008" description="In dbSNP:rs17857292." evidence="4">
    <original>E</original>
    <variation>G</variation>
    <location>
        <position position="295"/>
    </location>
</feature>
<feature type="sequence variant" id="VAR_039009" description="In dbSNP:rs10241894.">
    <original>L</original>
    <variation>I</variation>
    <location>
        <position position="437"/>
    </location>
</feature>
<feature type="mutagenesis site" description="Loss of interaction with CUL2. No effect on MAP3K5 activation." evidence="5">
    <original>A</original>
    <variation>P</variation>
    <location>
        <position position="409"/>
    </location>
</feature>
<feature type="strand" evidence="14">
    <location>
        <begin position="46"/>
        <end position="48"/>
    </location>
</feature>
<feature type="strand" evidence="14">
    <location>
        <begin position="96"/>
        <end position="99"/>
    </location>
</feature>
<feature type="strand" evidence="14">
    <location>
        <begin position="101"/>
        <end position="107"/>
    </location>
</feature>
<feature type="turn" evidence="14">
    <location>
        <begin position="114"/>
        <end position="118"/>
    </location>
</feature>
<feature type="helix" evidence="14">
    <location>
        <begin position="119"/>
        <end position="121"/>
    </location>
</feature>
<feature type="turn" evidence="14">
    <location>
        <begin position="123"/>
        <end position="126"/>
    </location>
</feature>
<feature type="strand" evidence="14">
    <location>
        <begin position="131"/>
        <end position="135"/>
    </location>
</feature>
<feature type="turn" evidence="14">
    <location>
        <begin position="136"/>
        <end position="139"/>
    </location>
</feature>
<feature type="strand" evidence="14">
    <location>
        <begin position="140"/>
        <end position="143"/>
    </location>
</feature>
<feature type="strand" evidence="14">
    <location>
        <begin position="158"/>
        <end position="162"/>
    </location>
</feature>
<feature type="strand" evidence="14">
    <location>
        <begin position="165"/>
        <end position="169"/>
    </location>
</feature>
<feature type="turn" evidence="14">
    <location>
        <begin position="176"/>
        <end position="178"/>
    </location>
</feature>
<feature type="strand" evidence="14">
    <location>
        <begin position="179"/>
        <end position="181"/>
    </location>
</feature>
<feature type="strand" evidence="14">
    <location>
        <begin position="183"/>
        <end position="188"/>
    </location>
</feature>
<feature type="turn" evidence="14">
    <location>
        <begin position="189"/>
        <end position="192"/>
    </location>
</feature>
<feature type="strand" evidence="14">
    <location>
        <begin position="193"/>
        <end position="196"/>
    </location>
</feature>
<feature type="strand" evidence="14">
    <location>
        <begin position="206"/>
        <end position="209"/>
    </location>
</feature>
<feature type="strand" evidence="14">
    <location>
        <begin position="211"/>
        <end position="215"/>
    </location>
</feature>
<feature type="strand" evidence="14">
    <location>
        <begin position="218"/>
        <end position="222"/>
    </location>
</feature>
<feature type="strand" evidence="14">
    <location>
        <begin position="227"/>
        <end position="229"/>
    </location>
</feature>
<feature type="strand" evidence="14">
    <location>
        <begin position="234"/>
        <end position="238"/>
    </location>
</feature>
<feature type="turn" evidence="14">
    <location>
        <begin position="239"/>
        <end position="242"/>
    </location>
</feature>
<feature type="strand" evidence="14">
    <location>
        <begin position="243"/>
        <end position="245"/>
    </location>
</feature>
<feature type="strand" evidence="14">
    <location>
        <begin position="264"/>
        <end position="267"/>
    </location>
</feature>
<feature type="strand" evidence="14">
    <location>
        <begin position="269"/>
        <end position="276"/>
    </location>
</feature>
<feature type="strand" evidence="14">
    <location>
        <begin position="286"/>
        <end position="293"/>
    </location>
</feature>
<feature type="turn" evidence="14">
    <location>
        <begin position="294"/>
        <end position="297"/>
    </location>
</feature>
<feature type="strand" evidence="14">
    <location>
        <begin position="298"/>
        <end position="303"/>
    </location>
</feature>
<feature type="strand" evidence="14">
    <location>
        <begin position="308"/>
        <end position="310"/>
    </location>
</feature>
<feature type="strand" evidence="14">
    <location>
        <begin position="320"/>
        <end position="323"/>
    </location>
</feature>
<feature type="strand" evidence="14">
    <location>
        <begin position="325"/>
        <end position="331"/>
    </location>
</feature>
<feature type="strand" evidence="14">
    <location>
        <begin position="336"/>
        <end position="339"/>
    </location>
</feature>
<feature type="strand" evidence="14">
    <location>
        <begin position="343"/>
        <end position="347"/>
    </location>
</feature>
<feature type="turn" evidence="14">
    <location>
        <begin position="348"/>
        <end position="350"/>
    </location>
</feature>
<feature type="strand" evidence="14">
    <location>
        <begin position="352"/>
        <end position="355"/>
    </location>
</feature>
<feature type="strand" evidence="14">
    <location>
        <begin position="368"/>
        <end position="371"/>
    </location>
</feature>
<feature type="strand" evidence="14">
    <location>
        <begin position="373"/>
        <end position="380"/>
    </location>
</feature>
<feature type="strand" evidence="14">
    <location>
        <begin position="383"/>
        <end position="385"/>
    </location>
</feature>
<feature type="turn" evidence="14">
    <location>
        <begin position="386"/>
        <end position="389"/>
    </location>
</feature>
<feature type="strand" evidence="14">
    <location>
        <begin position="395"/>
        <end position="399"/>
    </location>
</feature>
<feature type="helix" evidence="14">
    <location>
        <begin position="405"/>
        <end position="416"/>
    </location>
</feature>
<feature type="helix" evidence="14">
    <location>
        <begin position="418"/>
        <end position="422"/>
    </location>
</feature>
<feature type="helix" evidence="14">
    <location>
        <begin position="425"/>
        <end position="431"/>
    </location>
</feature>
<feature type="helix" evidence="14">
    <location>
        <begin position="435"/>
        <end position="441"/>
    </location>
</feature>
<keyword id="KW-0002">3D-structure</keyword>
<keyword id="KW-0025">Alternative splicing</keyword>
<keyword id="KW-0963">Cytoplasm</keyword>
<keyword id="KW-0880">Kelch repeat</keyword>
<keyword id="KW-0488">Methylation</keyword>
<keyword id="KW-0539">Nucleus</keyword>
<keyword id="KW-1267">Proteomics identification</keyword>
<keyword id="KW-1185">Reference proteome</keyword>
<keyword id="KW-0677">Repeat</keyword>
<keyword id="KW-0833">Ubl conjugation pathway</keyword>